<name>NAGK_VIBCH</name>
<comment type="function">
    <text evidence="1">Catalyzes the phosphorylation of N-acetyl-D-glucosamine (GlcNAc) derived from cell-wall degradation, yielding GlcNAc-6-P.</text>
</comment>
<comment type="catalytic activity">
    <reaction evidence="1">
        <text>N-acetyl-D-glucosamine + ATP = N-acetyl-D-glucosamine 6-phosphate + ADP + H(+)</text>
        <dbReference type="Rhea" id="RHEA:17417"/>
        <dbReference type="ChEBI" id="CHEBI:15378"/>
        <dbReference type="ChEBI" id="CHEBI:30616"/>
        <dbReference type="ChEBI" id="CHEBI:57513"/>
        <dbReference type="ChEBI" id="CHEBI:456216"/>
        <dbReference type="ChEBI" id="CHEBI:506227"/>
        <dbReference type="EC" id="2.7.1.59"/>
    </reaction>
</comment>
<comment type="pathway">
    <text evidence="1">Cell wall biogenesis; peptidoglycan recycling.</text>
</comment>
<comment type="similarity">
    <text evidence="1">Belongs to the ROK (NagC/XylR) family. NagK subfamily.</text>
</comment>
<organism>
    <name type="scientific">Vibrio cholerae serotype O1 (strain ATCC 39315 / El Tor Inaba N16961)</name>
    <dbReference type="NCBI Taxonomy" id="243277"/>
    <lineage>
        <taxon>Bacteria</taxon>
        <taxon>Pseudomonadati</taxon>
        <taxon>Pseudomonadota</taxon>
        <taxon>Gammaproteobacteria</taxon>
        <taxon>Vibrionales</taxon>
        <taxon>Vibrionaceae</taxon>
        <taxon>Vibrio</taxon>
    </lineage>
</organism>
<feature type="chain" id="PRO_0000270119" description="N-acetyl-D-glucosamine kinase">
    <location>
        <begin position="1"/>
        <end position="302"/>
    </location>
</feature>
<feature type="binding site" evidence="1">
    <location>
        <begin position="4"/>
        <end position="11"/>
    </location>
    <ligand>
        <name>ATP</name>
        <dbReference type="ChEBI" id="CHEBI:30616"/>
    </ligand>
</feature>
<feature type="binding site" evidence="1">
    <location>
        <begin position="133"/>
        <end position="140"/>
    </location>
    <ligand>
        <name>ATP</name>
        <dbReference type="ChEBI" id="CHEBI:30616"/>
    </ligand>
</feature>
<feature type="binding site" evidence="1">
    <location>
        <position position="157"/>
    </location>
    <ligand>
        <name>Zn(2+)</name>
        <dbReference type="ChEBI" id="CHEBI:29105"/>
    </ligand>
</feature>
<feature type="binding site" evidence="1">
    <location>
        <position position="177"/>
    </location>
    <ligand>
        <name>Zn(2+)</name>
        <dbReference type="ChEBI" id="CHEBI:29105"/>
    </ligand>
</feature>
<feature type="binding site" evidence="1">
    <location>
        <position position="179"/>
    </location>
    <ligand>
        <name>Zn(2+)</name>
        <dbReference type="ChEBI" id="CHEBI:29105"/>
    </ligand>
</feature>
<feature type="binding site" evidence="1">
    <location>
        <position position="184"/>
    </location>
    <ligand>
        <name>Zn(2+)</name>
        <dbReference type="ChEBI" id="CHEBI:29105"/>
    </ligand>
</feature>
<evidence type="ECO:0000255" key="1">
    <source>
        <dbReference type="HAMAP-Rule" id="MF_01271"/>
    </source>
</evidence>
<reference key="1">
    <citation type="journal article" date="2000" name="Nature">
        <title>DNA sequence of both chromosomes of the cholera pathogen Vibrio cholerae.</title>
        <authorList>
            <person name="Heidelberg J.F."/>
            <person name="Eisen J.A."/>
            <person name="Nelson W.C."/>
            <person name="Clayton R.A."/>
            <person name="Gwinn M.L."/>
            <person name="Dodson R.J."/>
            <person name="Haft D.H."/>
            <person name="Hickey E.K."/>
            <person name="Peterson J.D."/>
            <person name="Umayam L.A."/>
            <person name="Gill S.R."/>
            <person name="Nelson K.E."/>
            <person name="Read T.D."/>
            <person name="Tettelin H."/>
            <person name="Richardson D.L."/>
            <person name="Ermolaeva M.D."/>
            <person name="Vamathevan J.J."/>
            <person name="Bass S."/>
            <person name="Qin H."/>
            <person name="Dragoi I."/>
            <person name="Sellers P."/>
            <person name="McDonald L.A."/>
            <person name="Utterback T.R."/>
            <person name="Fleischmann R.D."/>
            <person name="Nierman W.C."/>
            <person name="White O."/>
            <person name="Salzberg S.L."/>
            <person name="Smith H.O."/>
            <person name="Colwell R.R."/>
            <person name="Mekalanos J.J."/>
            <person name="Venter J.C."/>
            <person name="Fraser C.M."/>
        </authorList>
    </citation>
    <scope>NUCLEOTIDE SEQUENCE [LARGE SCALE GENOMIC DNA]</scope>
    <source>
        <strain>ATCC 39315 / El Tor Inaba N16961</strain>
    </source>
</reference>
<gene>
    <name evidence="1" type="primary">nagK</name>
    <name type="ordered locus">VC_1532</name>
</gene>
<protein>
    <recommendedName>
        <fullName evidence="1">N-acetyl-D-glucosamine kinase</fullName>
        <ecNumber evidence="1">2.7.1.59</ecNumber>
    </recommendedName>
    <alternativeName>
        <fullName evidence="1">GlcNAc kinase</fullName>
    </alternativeName>
</protein>
<proteinExistence type="inferred from homology"/>
<accession>Q9KRV2</accession>
<keyword id="KW-0067">ATP-binding</keyword>
<keyword id="KW-0119">Carbohydrate metabolism</keyword>
<keyword id="KW-0418">Kinase</keyword>
<keyword id="KW-0479">Metal-binding</keyword>
<keyword id="KW-0547">Nucleotide-binding</keyword>
<keyword id="KW-1185">Reference proteome</keyword>
<keyword id="KW-0808">Transferase</keyword>
<keyword id="KW-0862">Zinc</keyword>
<sequence>MYYGFDVGGTKIEFGAFNEQLERVATERVATPTDDYAKLVETIAGLVHKYDAQFGVEGTVGLGIPGMEDADNGCVLTVNVPAAKGKPLRADLETKLGRAVKVENDANCFALSEAWDDELKEAASVMGLILGTGFGGGLVYEGKVFSGRNHVAGEIGHMRLPIDAWFHLGEKAPLLGCGCGNKGCMDNYLSGRGFELLYEHYYGEKKKAIDIITAQKEGESKAVEHVERFMELLAICFANIFTANDPHVVVLGGGLSNYDLIYEEMPKRVPKHLLSVAKCPKIVKAKHGDSGGVRGAAFLNIK</sequence>
<dbReference type="EC" id="2.7.1.59" evidence="1"/>
<dbReference type="EMBL" id="AE003852">
    <property type="protein sequence ID" value="AAF94686.1"/>
    <property type="molecule type" value="Genomic_DNA"/>
</dbReference>
<dbReference type="PIR" id="B82189">
    <property type="entry name" value="B82189"/>
</dbReference>
<dbReference type="RefSeq" id="NP_231172.1">
    <property type="nucleotide sequence ID" value="NC_002505.1"/>
</dbReference>
<dbReference type="RefSeq" id="WP_000291349.1">
    <property type="nucleotide sequence ID" value="NZ_LT906614.1"/>
</dbReference>
<dbReference type="SMR" id="Q9KRV2"/>
<dbReference type="STRING" id="243277.VC_1532"/>
<dbReference type="DNASU" id="2613911"/>
<dbReference type="EnsemblBacteria" id="AAF94686">
    <property type="protein sequence ID" value="AAF94686"/>
    <property type="gene ID" value="VC_1532"/>
</dbReference>
<dbReference type="KEGG" id="vch:VC_1532"/>
<dbReference type="PATRIC" id="fig|243277.26.peg.1460"/>
<dbReference type="eggNOG" id="COG1940">
    <property type="taxonomic scope" value="Bacteria"/>
</dbReference>
<dbReference type="HOGENOM" id="CLU_036604_0_3_6"/>
<dbReference type="UniPathway" id="UPA00544"/>
<dbReference type="Proteomes" id="UP000000584">
    <property type="component" value="Chromosome 1"/>
</dbReference>
<dbReference type="GO" id="GO:0005524">
    <property type="term" value="F:ATP binding"/>
    <property type="evidence" value="ECO:0007669"/>
    <property type="project" value="UniProtKB-UniRule"/>
</dbReference>
<dbReference type="GO" id="GO:0045127">
    <property type="term" value="F:N-acetylglucosamine kinase activity"/>
    <property type="evidence" value="ECO:0000318"/>
    <property type="project" value="GO_Central"/>
</dbReference>
<dbReference type="GO" id="GO:0008270">
    <property type="term" value="F:zinc ion binding"/>
    <property type="evidence" value="ECO:0007669"/>
    <property type="project" value="UniProtKB-UniRule"/>
</dbReference>
<dbReference type="GO" id="GO:0006044">
    <property type="term" value="P:N-acetylglucosamine metabolic process"/>
    <property type="evidence" value="ECO:0007669"/>
    <property type="project" value="UniProtKB-UniRule"/>
</dbReference>
<dbReference type="GO" id="GO:0009254">
    <property type="term" value="P:peptidoglycan turnover"/>
    <property type="evidence" value="ECO:0007669"/>
    <property type="project" value="UniProtKB-UniRule"/>
</dbReference>
<dbReference type="CDD" id="cd24057">
    <property type="entry name" value="ASKHA_NBD_ROK_NAGK"/>
    <property type="match status" value="1"/>
</dbReference>
<dbReference type="FunFam" id="3.30.420.40:FF:000049">
    <property type="entry name" value="N-acetyl-D-glucosamine kinase"/>
    <property type="match status" value="1"/>
</dbReference>
<dbReference type="FunFam" id="3.30.420.40:FF:000051">
    <property type="entry name" value="N-acetyl-D-glucosamine kinase"/>
    <property type="match status" value="1"/>
</dbReference>
<dbReference type="Gene3D" id="3.30.420.40">
    <property type="match status" value="2"/>
</dbReference>
<dbReference type="HAMAP" id="MF_01271">
    <property type="entry name" value="GlcNAc_kinase"/>
    <property type="match status" value="1"/>
</dbReference>
<dbReference type="InterPro" id="IPR043129">
    <property type="entry name" value="ATPase_NBD"/>
</dbReference>
<dbReference type="InterPro" id="IPR023505">
    <property type="entry name" value="N-acetyl-D-glucosamine_kinase"/>
</dbReference>
<dbReference type="InterPro" id="IPR000600">
    <property type="entry name" value="ROK"/>
</dbReference>
<dbReference type="InterPro" id="IPR049874">
    <property type="entry name" value="ROK_cs"/>
</dbReference>
<dbReference type="NCBIfam" id="NF009835">
    <property type="entry name" value="PRK13310.1"/>
    <property type="match status" value="1"/>
</dbReference>
<dbReference type="PANTHER" id="PTHR18964:SF162">
    <property type="entry name" value="N-ACETYL-D-GLUCOSAMINE KINASE"/>
    <property type="match status" value="1"/>
</dbReference>
<dbReference type="PANTHER" id="PTHR18964">
    <property type="entry name" value="ROK (REPRESSOR, ORF, KINASE) FAMILY"/>
    <property type="match status" value="1"/>
</dbReference>
<dbReference type="Pfam" id="PF00480">
    <property type="entry name" value="ROK"/>
    <property type="match status" value="1"/>
</dbReference>
<dbReference type="SUPFAM" id="SSF53067">
    <property type="entry name" value="Actin-like ATPase domain"/>
    <property type="match status" value="1"/>
</dbReference>
<dbReference type="PROSITE" id="PS01125">
    <property type="entry name" value="ROK"/>
    <property type="match status" value="1"/>
</dbReference>